<reference key="1">
    <citation type="journal article" date="1995" name="Nat. Genet.">
        <title>Rapid evolution of a unique family of primate ribonuclease genes.</title>
        <authorList>
            <person name="Rosenberg H.F."/>
            <person name="Dyer K.D."/>
            <person name="Tiffany H.L."/>
            <person name="Gonzalez M."/>
        </authorList>
    </citation>
    <scope>NUCLEOTIDE SEQUENCE [GENOMIC DNA]</scope>
</reference>
<feature type="signal peptide" evidence="1">
    <location>
        <begin position="1"/>
        <end position="27"/>
    </location>
</feature>
<feature type="chain" id="PRO_0000030861" description="Eosinophil cationic protein">
    <location>
        <begin position="28"/>
        <end position="160"/>
    </location>
</feature>
<feature type="region of interest" description="Required for nearly all of the bactericidal activities; partially involved in LPS-binding" evidence="1">
    <location>
        <begin position="28"/>
        <end position="72"/>
    </location>
</feature>
<feature type="active site" description="Proton acceptor" evidence="1">
    <location>
        <position position="42"/>
    </location>
</feature>
<feature type="active site" description="Proton donor" evidence="1">
    <location>
        <position position="155"/>
    </location>
</feature>
<feature type="binding site" evidence="1">
    <location>
        <begin position="65"/>
        <end position="69"/>
    </location>
    <ligand>
        <name>substrate</name>
    </ligand>
</feature>
<feature type="modified residue" description="3'-nitrotyrosine" evidence="2">
    <location>
        <position position="60"/>
    </location>
</feature>
<feature type="glycosylation site" description="N-linked (GlcNAc...) asparagine" evidence="3">
    <location>
        <position position="84"/>
    </location>
</feature>
<feature type="glycosylation site" description="N-linked (GlcNAc...) asparagine" evidence="3">
    <location>
        <position position="92"/>
    </location>
</feature>
<feature type="glycosylation site" description="N-linked (GlcNAc...) asparagine" evidence="3">
    <location>
        <position position="119"/>
    </location>
</feature>
<feature type="disulfide bond" evidence="1">
    <location>
        <begin position="50"/>
        <end position="110"/>
    </location>
</feature>
<feature type="disulfide bond" evidence="1">
    <location>
        <begin position="64"/>
        <end position="123"/>
    </location>
</feature>
<feature type="disulfide bond" evidence="1">
    <location>
        <begin position="82"/>
        <end position="138"/>
    </location>
</feature>
<feature type="disulfide bond" evidence="1">
    <location>
        <begin position="89"/>
        <end position="98"/>
    </location>
</feature>
<sequence>MVPKLFTSQICLLLLLGLMGVEGSLHARPPQFTRAQWFAIQHISLNPPRCTIAMRVINNYRWRCKNQNTFLRTTFANVVNVCGNQSIRCLHNRTLNNCHRSRFRVPLLHCDLINPGAQNISNCRYADRPGRRFYVVACDNRDPQDSPRYPVVPVHLDTTI</sequence>
<name>ECP_GORGO</name>
<dbReference type="EC" id="3.1.27.-"/>
<dbReference type="EMBL" id="U24097">
    <property type="protein sequence ID" value="AAC50143.1"/>
    <property type="molecule type" value="Genomic_DNA"/>
</dbReference>
<dbReference type="PIR" id="I37033">
    <property type="entry name" value="I37033"/>
</dbReference>
<dbReference type="RefSeq" id="XP_004054906.3">
    <property type="nucleotide sequence ID" value="XM_004054858.4"/>
</dbReference>
<dbReference type="BMRB" id="P47778"/>
<dbReference type="SMR" id="P47778"/>
<dbReference type="FunCoup" id="P47778">
    <property type="interactions" value="39"/>
</dbReference>
<dbReference type="STRING" id="9593.ENSGGOP00000017122"/>
<dbReference type="GlyCosmos" id="P47778">
    <property type="glycosylation" value="3 sites, No reported glycans"/>
</dbReference>
<dbReference type="Ensembl" id="ENSGGOT00000027467.2">
    <property type="protein sequence ID" value="ENSGGOP00000017122.1"/>
    <property type="gene ID" value="ENSGGOG00000037139.1"/>
</dbReference>
<dbReference type="GeneID" id="101147304"/>
<dbReference type="KEGG" id="ggo:101147304"/>
<dbReference type="CTD" id="6037"/>
<dbReference type="GeneTree" id="ENSGT00940000162253"/>
<dbReference type="HOGENOM" id="CLU_117006_0_1_1"/>
<dbReference type="InParanoid" id="P47778"/>
<dbReference type="OMA" id="PRCTIAM"/>
<dbReference type="Proteomes" id="UP000001519">
    <property type="component" value="Chromosome 14"/>
</dbReference>
<dbReference type="Bgee" id="ENSGGOG00000037139">
    <property type="expression patterns" value="Expressed in frontal cortex and 2 other cell types or tissues"/>
</dbReference>
<dbReference type="GO" id="GO:0005615">
    <property type="term" value="C:extracellular space"/>
    <property type="evidence" value="ECO:0000318"/>
    <property type="project" value="GO_Central"/>
</dbReference>
<dbReference type="GO" id="GO:0004519">
    <property type="term" value="F:endonuclease activity"/>
    <property type="evidence" value="ECO:0007669"/>
    <property type="project" value="UniProtKB-KW"/>
</dbReference>
<dbReference type="GO" id="GO:0001530">
    <property type="term" value="F:lipopolysaccharide binding"/>
    <property type="evidence" value="ECO:0007669"/>
    <property type="project" value="Ensembl"/>
</dbReference>
<dbReference type="GO" id="GO:0003676">
    <property type="term" value="F:nucleic acid binding"/>
    <property type="evidence" value="ECO:0007669"/>
    <property type="project" value="InterPro"/>
</dbReference>
<dbReference type="GO" id="GO:0004540">
    <property type="term" value="F:RNA nuclease activity"/>
    <property type="evidence" value="ECO:0000318"/>
    <property type="project" value="GO_Central"/>
</dbReference>
<dbReference type="GO" id="GO:0061844">
    <property type="term" value="P:antimicrobial humoral immune response mediated by antimicrobial peptide"/>
    <property type="evidence" value="ECO:0007669"/>
    <property type="project" value="Ensembl"/>
</dbReference>
<dbReference type="GO" id="GO:0006935">
    <property type="term" value="P:chemotaxis"/>
    <property type="evidence" value="ECO:0000318"/>
    <property type="project" value="GO_Central"/>
</dbReference>
<dbReference type="GO" id="GO:0050829">
    <property type="term" value="P:defense response to Gram-negative bacterium"/>
    <property type="evidence" value="ECO:0007669"/>
    <property type="project" value="Ensembl"/>
</dbReference>
<dbReference type="GO" id="GO:0050830">
    <property type="term" value="P:defense response to Gram-positive bacterium"/>
    <property type="evidence" value="ECO:0000318"/>
    <property type="project" value="GO_Central"/>
</dbReference>
<dbReference type="GO" id="GO:0043152">
    <property type="term" value="P:induction of bacterial agglutination"/>
    <property type="evidence" value="ECO:0007669"/>
    <property type="project" value="Ensembl"/>
</dbReference>
<dbReference type="GO" id="GO:0002227">
    <property type="term" value="P:innate immune response in mucosa"/>
    <property type="evidence" value="ECO:0000318"/>
    <property type="project" value="GO_Central"/>
</dbReference>
<dbReference type="CDD" id="cd06265">
    <property type="entry name" value="RNase_A_canonical"/>
    <property type="match status" value="1"/>
</dbReference>
<dbReference type="FunFam" id="3.10.130.10:FF:000001">
    <property type="entry name" value="Ribonuclease pancreatic"/>
    <property type="match status" value="1"/>
</dbReference>
<dbReference type="Gene3D" id="3.10.130.10">
    <property type="entry name" value="Ribonuclease A-like domain"/>
    <property type="match status" value="1"/>
</dbReference>
<dbReference type="InterPro" id="IPR001427">
    <property type="entry name" value="RNaseA"/>
</dbReference>
<dbReference type="InterPro" id="IPR036816">
    <property type="entry name" value="RNaseA-like_dom_sf"/>
</dbReference>
<dbReference type="InterPro" id="IPR023411">
    <property type="entry name" value="RNaseA_AS"/>
</dbReference>
<dbReference type="InterPro" id="IPR023412">
    <property type="entry name" value="RNaseA_domain"/>
</dbReference>
<dbReference type="PANTHER" id="PTHR11437:SF3">
    <property type="entry name" value="EOSINOPHIL CATIONIC PROTEIN"/>
    <property type="match status" value="1"/>
</dbReference>
<dbReference type="PANTHER" id="PTHR11437">
    <property type="entry name" value="RIBONUCLEASE"/>
    <property type="match status" value="1"/>
</dbReference>
<dbReference type="Pfam" id="PF00074">
    <property type="entry name" value="RnaseA"/>
    <property type="match status" value="1"/>
</dbReference>
<dbReference type="PRINTS" id="PR00794">
    <property type="entry name" value="RIBONUCLEASE"/>
</dbReference>
<dbReference type="SMART" id="SM00092">
    <property type="entry name" value="RNAse_Pc"/>
    <property type="match status" value="1"/>
</dbReference>
<dbReference type="SUPFAM" id="SSF54076">
    <property type="entry name" value="RNase A-like"/>
    <property type="match status" value="1"/>
</dbReference>
<dbReference type="PROSITE" id="PS00127">
    <property type="entry name" value="RNASE_PANCREATIC"/>
    <property type="match status" value="1"/>
</dbReference>
<accession>P47778</accession>
<keyword id="KW-1015">Disulfide bond</keyword>
<keyword id="KW-0255">Endonuclease</keyword>
<keyword id="KW-0325">Glycoprotein</keyword>
<keyword id="KW-0378">Hydrolase</keyword>
<keyword id="KW-0944">Nitration</keyword>
<keyword id="KW-0540">Nuclease</keyword>
<keyword id="KW-1185">Reference proteome</keyword>
<keyword id="KW-0964">Secreted</keyword>
<keyword id="KW-0732">Signal</keyword>
<comment type="function">
    <text evidence="1">Cytotoxin and helminthotoxin with low-efficiency ribonuclease activity. Possesses a wide variety of biological activities. Exhibits antibacterial activity (By similarity).</text>
</comment>
<comment type="subunit">
    <text evidence="1">Interacts with bacterial lipopolysaccharide (LPS) and lipoteichoic acid (LTA). In vitro interacts with phospholipid bilayers.</text>
</comment>
<comment type="subcellular location">
    <subcellularLocation>
        <location evidence="1">Secreted</location>
    </subcellularLocation>
    <text evidence="1">Located in the matrix of eosinophil large specific granule, which are released following activation by an immune stimulus.</text>
</comment>
<comment type="similarity">
    <text evidence="4">Belongs to the pancreatic ribonuclease family.</text>
</comment>
<protein>
    <recommendedName>
        <fullName>Eosinophil cationic protein</fullName>
        <shortName>ECP</shortName>
        <ecNumber>3.1.27.-</ecNumber>
    </recommendedName>
    <alternativeName>
        <fullName>Ribonuclease 3</fullName>
        <shortName>RNase 3</shortName>
    </alternativeName>
</protein>
<organism>
    <name type="scientific">Gorilla gorilla gorilla</name>
    <name type="common">Western lowland gorilla</name>
    <dbReference type="NCBI Taxonomy" id="9595"/>
    <lineage>
        <taxon>Eukaryota</taxon>
        <taxon>Metazoa</taxon>
        <taxon>Chordata</taxon>
        <taxon>Craniata</taxon>
        <taxon>Vertebrata</taxon>
        <taxon>Euteleostomi</taxon>
        <taxon>Mammalia</taxon>
        <taxon>Eutheria</taxon>
        <taxon>Euarchontoglires</taxon>
        <taxon>Primates</taxon>
        <taxon>Haplorrhini</taxon>
        <taxon>Catarrhini</taxon>
        <taxon>Hominidae</taxon>
        <taxon>Gorilla</taxon>
    </lineage>
</organism>
<proteinExistence type="inferred from homology"/>
<gene>
    <name type="primary">RNASE3</name>
    <name type="synonym">RNS3</name>
</gene>
<evidence type="ECO:0000250" key="1"/>
<evidence type="ECO:0000250" key="2">
    <source>
        <dbReference type="UniProtKB" id="P12724"/>
    </source>
</evidence>
<evidence type="ECO:0000255" key="3"/>
<evidence type="ECO:0000305" key="4"/>